<organism>
    <name type="scientific">Fagopyrum esculentum subsp. ancestrale</name>
    <name type="common">Wild buckwheat</name>
    <dbReference type="NCBI Taxonomy" id="180217"/>
    <lineage>
        <taxon>Eukaryota</taxon>
        <taxon>Viridiplantae</taxon>
        <taxon>Streptophyta</taxon>
        <taxon>Embryophyta</taxon>
        <taxon>Tracheophyta</taxon>
        <taxon>Spermatophyta</taxon>
        <taxon>Magnoliopsida</taxon>
        <taxon>eudicotyledons</taxon>
        <taxon>Gunneridae</taxon>
        <taxon>Pentapetalae</taxon>
        <taxon>Caryophyllales</taxon>
        <taxon>Polygonaceae</taxon>
        <taxon>Polygonoideae</taxon>
        <taxon>Fagopyreae</taxon>
        <taxon>Fagopyrum</taxon>
    </lineage>
</organism>
<reference key="1">
    <citation type="journal article" date="2008" name="BMC Plant Biol.">
        <title>Comparative chloroplast genomics and phylogenetics of Fagopyrum esculentum ssp. ancestrale - a wild ancestor of cultivated buckwheat.</title>
        <authorList>
            <person name="Logacheva M.D."/>
            <person name="Samigullin T.H."/>
            <person name="Dhingra A."/>
            <person name="Penin A.A."/>
        </authorList>
    </citation>
    <scope>NUCLEOTIDE SEQUENCE [LARGE SCALE GENOMIC DNA]</scope>
</reference>
<comment type="function">
    <text evidence="2">Photosystem II (PSII) is a light-driven water:plastoquinone oxidoreductase that uses light energy to abstract electrons from H(2)O, generating O(2) and a proton gradient subsequently used for ATP formation. It consists of a core antenna complex that captures photons, and an electron transfer chain that converts photonic excitation into a charge separation. The D1/D2 (PsbA/PsbD) reaction center heterodimer binds P680, the primary electron donor of PSII as well as several subsequent electron acceptors. D2 is needed for assembly of a stable PSII complex.</text>
</comment>
<comment type="catalytic activity">
    <reaction evidence="2">
        <text>2 a plastoquinone + 4 hnu + 2 H2O = 2 a plastoquinol + O2</text>
        <dbReference type="Rhea" id="RHEA:36359"/>
        <dbReference type="Rhea" id="RHEA-COMP:9561"/>
        <dbReference type="Rhea" id="RHEA-COMP:9562"/>
        <dbReference type="ChEBI" id="CHEBI:15377"/>
        <dbReference type="ChEBI" id="CHEBI:15379"/>
        <dbReference type="ChEBI" id="CHEBI:17757"/>
        <dbReference type="ChEBI" id="CHEBI:30212"/>
        <dbReference type="ChEBI" id="CHEBI:62192"/>
        <dbReference type="EC" id="1.10.3.9"/>
    </reaction>
</comment>
<comment type="cofactor">
    <text evidence="2">The D1/D2 heterodimer binds P680, chlorophylls that are the primary electron donor of PSII, and subsequent electron acceptors. It shares a non-heme iron and each subunit binds pheophytin, quinone, additional chlorophylls, carotenoids and lipids. There is also a Cl(-1) ion associated with D1 and D2, which is required for oxygen evolution. The PSII complex binds additional chlorophylls, carotenoids and specific lipids.</text>
</comment>
<comment type="subunit">
    <text evidence="2">PSII is composed of 1 copy each of membrane proteins PsbA, PsbB, PsbC, PsbD, PsbE, PsbF, PsbH, PsbI, PsbJ, PsbK, PsbL, PsbM, PsbT, PsbX, PsbY, PsbZ, Psb30/Ycf12, at least 3 peripheral proteins of the oxygen-evolving complex and a large number of cofactors. It forms dimeric complexes.</text>
</comment>
<comment type="subcellular location">
    <subcellularLocation>
        <location evidence="2">Plastid</location>
        <location evidence="2">Chloroplast thylakoid membrane</location>
        <topology evidence="2">Multi-pass membrane protein</topology>
    </subcellularLocation>
</comment>
<comment type="miscellaneous">
    <text evidence="2">2 of the reaction center chlorophylls (ChlD1 and ChlD2) are entirely coordinated by water.</text>
</comment>
<comment type="similarity">
    <text evidence="2">Belongs to the reaction center PufL/M/PsbA/D family.</text>
</comment>
<dbReference type="EC" id="1.10.3.9" evidence="2"/>
<dbReference type="EMBL" id="EU254477">
    <property type="protein sequence ID" value="ABY79727.1"/>
    <property type="molecule type" value="Genomic_DNA"/>
</dbReference>
<dbReference type="RefSeq" id="YP_001936512.1">
    <property type="nucleotide sequence ID" value="NC_010776.1"/>
</dbReference>
<dbReference type="SMR" id="B2XWK0"/>
<dbReference type="GeneID" id="6335975"/>
<dbReference type="GO" id="GO:0009535">
    <property type="term" value="C:chloroplast thylakoid membrane"/>
    <property type="evidence" value="ECO:0007669"/>
    <property type="project" value="UniProtKB-SubCell"/>
</dbReference>
<dbReference type="GO" id="GO:0009523">
    <property type="term" value="C:photosystem II"/>
    <property type="evidence" value="ECO:0007669"/>
    <property type="project" value="UniProtKB-KW"/>
</dbReference>
<dbReference type="GO" id="GO:0016168">
    <property type="term" value="F:chlorophyll binding"/>
    <property type="evidence" value="ECO:0007669"/>
    <property type="project" value="UniProtKB-UniRule"/>
</dbReference>
<dbReference type="GO" id="GO:0045156">
    <property type="term" value="F:electron transporter, transferring electrons within the cyclic electron transport pathway of photosynthesis activity"/>
    <property type="evidence" value="ECO:0007669"/>
    <property type="project" value="InterPro"/>
</dbReference>
<dbReference type="GO" id="GO:0005506">
    <property type="term" value="F:iron ion binding"/>
    <property type="evidence" value="ECO:0007669"/>
    <property type="project" value="UniProtKB-UniRule"/>
</dbReference>
<dbReference type="GO" id="GO:0010242">
    <property type="term" value="F:oxygen evolving activity"/>
    <property type="evidence" value="ECO:0007669"/>
    <property type="project" value="UniProtKB-EC"/>
</dbReference>
<dbReference type="GO" id="GO:0009772">
    <property type="term" value="P:photosynthetic electron transport in photosystem II"/>
    <property type="evidence" value="ECO:0007669"/>
    <property type="project" value="InterPro"/>
</dbReference>
<dbReference type="CDD" id="cd09288">
    <property type="entry name" value="Photosystem-II_D2"/>
    <property type="match status" value="1"/>
</dbReference>
<dbReference type="FunFam" id="1.20.85.10:FF:000001">
    <property type="entry name" value="photosystem II D2 protein-like"/>
    <property type="match status" value="1"/>
</dbReference>
<dbReference type="Gene3D" id="1.20.85.10">
    <property type="entry name" value="Photosystem II protein D1-like"/>
    <property type="match status" value="1"/>
</dbReference>
<dbReference type="HAMAP" id="MF_01383">
    <property type="entry name" value="PSII_PsbD_D2"/>
    <property type="match status" value="1"/>
</dbReference>
<dbReference type="InterPro" id="IPR055266">
    <property type="entry name" value="D1/D2"/>
</dbReference>
<dbReference type="InterPro" id="IPR036854">
    <property type="entry name" value="Photo_II_D1/D2_sf"/>
</dbReference>
<dbReference type="InterPro" id="IPR000484">
    <property type="entry name" value="Photo_RC_L/M"/>
</dbReference>
<dbReference type="InterPro" id="IPR055265">
    <property type="entry name" value="Photo_RC_L/M_CS"/>
</dbReference>
<dbReference type="InterPro" id="IPR005868">
    <property type="entry name" value="PSII_PsbD/D2"/>
</dbReference>
<dbReference type="NCBIfam" id="TIGR01152">
    <property type="entry name" value="psbD"/>
    <property type="match status" value="1"/>
</dbReference>
<dbReference type="PANTHER" id="PTHR33149:SF12">
    <property type="entry name" value="PHOTOSYSTEM II D2 PROTEIN"/>
    <property type="match status" value="1"/>
</dbReference>
<dbReference type="PANTHER" id="PTHR33149">
    <property type="entry name" value="PHOTOSYSTEM II PROTEIN D1"/>
    <property type="match status" value="1"/>
</dbReference>
<dbReference type="Pfam" id="PF00124">
    <property type="entry name" value="Photo_RC"/>
    <property type="match status" value="1"/>
</dbReference>
<dbReference type="PRINTS" id="PR00256">
    <property type="entry name" value="REACTNCENTRE"/>
</dbReference>
<dbReference type="SUPFAM" id="SSF81483">
    <property type="entry name" value="Bacterial photosystem II reaction centre, L and M subunits"/>
    <property type="match status" value="1"/>
</dbReference>
<dbReference type="PROSITE" id="PS00244">
    <property type="entry name" value="REACTION_CENTER"/>
    <property type="match status" value="1"/>
</dbReference>
<feature type="initiator methionine" description="Removed" evidence="1">
    <location>
        <position position="1"/>
    </location>
</feature>
<feature type="chain" id="PRO_0000359652" description="Photosystem II D2 protein">
    <location>
        <begin position="2"/>
        <end position="353"/>
    </location>
</feature>
<feature type="transmembrane region" description="Helical" evidence="2">
    <location>
        <begin position="41"/>
        <end position="61"/>
    </location>
</feature>
<feature type="transmembrane region" description="Helical" evidence="2">
    <location>
        <begin position="125"/>
        <end position="141"/>
    </location>
</feature>
<feature type="transmembrane region" description="Helical" evidence="2">
    <location>
        <begin position="153"/>
        <end position="166"/>
    </location>
</feature>
<feature type="transmembrane region" description="Helical" evidence="2">
    <location>
        <begin position="208"/>
        <end position="228"/>
    </location>
</feature>
<feature type="transmembrane region" description="Helical" evidence="2">
    <location>
        <begin position="279"/>
        <end position="295"/>
    </location>
</feature>
<feature type="binding site" description="axial binding residue" evidence="2">
    <location>
        <position position="118"/>
    </location>
    <ligand>
        <name>chlorophyll a</name>
        <dbReference type="ChEBI" id="CHEBI:58416"/>
        <label>ChlzD2</label>
    </ligand>
    <ligandPart>
        <name>Mg</name>
        <dbReference type="ChEBI" id="CHEBI:25107"/>
    </ligandPart>
</feature>
<feature type="binding site" evidence="2">
    <location>
        <position position="130"/>
    </location>
    <ligand>
        <name>pheophytin a</name>
        <dbReference type="ChEBI" id="CHEBI:136840"/>
        <label>D2</label>
    </ligand>
</feature>
<feature type="binding site" evidence="2">
    <location>
        <position position="143"/>
    </location>
    <ligand>
        <name>pheophytin a</name>
        <dbReference type="ChEBI" id="CHEBI:136840"/>
        <label>D2</label>
    </ligand>
</feature>
<feature type="binding site" description="axial binding residue" evidence="2">
    <location>
        <position position="198"/>
    </location>
    <ligand>
        <name>chlorophyll a</name>
        <dbReference type="ChEBI" id="CHEBI:58416"/>
        <label>PD2</label>
    </ligand>
    <ligandPart>
        <name>Mg</name>
        <dbReference type="ChEBI" id="CHEBI:25107"/>
    </ligandPart>
</feature>
<feature type="binding site" evidence="2">
    <location>
        <position position="215"/>
    </location>
    <ligand>
        <name>a plastoquinone</name>
        <dbReference type="ChEBI" id="CHEBI:17757"/>
        <label>Q(A)</label>
    </ligand>
</feature>
<feature type="binding site" evidence="2">
    <location>
        <position position="215"/>
    </location>
    <ligand>
        <name>Fe cation</name>
        <dbReference type="ChEBI" id="CHEBI:24875"/>
        <note>ligand shared with heterodimeric partner</note>
    </ligand>
</feature>
<feature type="binding site" evidence="2">
    <location>
        <position position="262"/>
    </location>
    <ligand>
        <name>a plastoquinone</name>
        <dbReference type="ChEBI" id="CHEBI:17757"/>
        <label>Q(A)</label>
    </ligand>
</feature>
<feature type="binding site" evidence="2">
    <location>
        <position position="269"/>
    </location>
    <ligand>
        <name>Fe cation</name>
        <dbReference type="ChEBI" id="CHEBI:24875"/>
        <note>ligand shared with heterodimeric partner</note>
    </ligand>
</feature>
<feature type="modified residue" description="N-acetylthreonine" evidence="1">
    <location>
        <position position="2"/>
    </location>
</feature>
<feature type="modified residue" description="Phosphothreonine" evidence="1">
    <location>
        <position position="2"/>
    </location>
</feature>
<sequence length="353" mass="39487">MTIALGKVTKDENDLFDIMDDWLRRDRFVFVGWSGLLLFPCAYFAVGGWFTGTTFVTSWYTHGLASSYLEGCNFLTAAVSTPANSLAHSLLLLWGPEAQGDFTRWCQLGGLWTFVALHGAFGLIGFMLRQFELARSVQLRPYNAIAFSGPIAVFVSVFLIYPLGQSGWFFAPSFGVAAIFRFILFFQGFHNWTLNPFHMMGVAGVLGAALLCAIHGATVENTLFEDGDGANTFRAFNPTQAEETYSMVTANRFWSQIFGVAFSNKRWLHFFMLFVPVTGLWMSALGVVGLALNLRAYDFVSQEIRAAEDPEFETFYTKNILLNEGIRAWMAAQDQPHENLIFPEEVLPRGNAL</sequence>
<proteinExistence type="inferred from homology"/>
<gene>
    <name evidence="2" type="primary">psbD</name>
</gene>
<protein>
    <recommendedName>
        <fullName evidence="2">Photosystem II D2 protein</fullName>
        <shortName evidence="2">PSII D2 protein</shortName>
        <ecNumber evidence="2">1.10.3.9</ecNumber>
    </recommendedName>
    <alternativeName>
        <fullName evidence="2">Photosystem Q(A) protein</fullName>
    </alternativeName>
</protein>
<accession>B2XWK0</accession>
<geneLocation type="chloroplast"/>
<name>PSBD_FAGEA</name>
<keyword id="KW-0007">Acetylation</keyword>
<keyword id="KW-0148">Chlorophyll</keyword>
<keyword id="KW-0150">Chloroplast</keyword>
<keyword id="KW-0157">Chromophore</keyword>
<keyword id="KW-0249">Electron transport</keyword>
<keyword id="KW-0408">Iron</keyword>
<keyword id="KW-0460">Magnesium</keyword>
<keyword id="KW-0472">Membrane</keyword>
<keyword id="KW-0479">Metal-binding</keyword>
<keyword id="KW-0560">Oxidoreductase</keyword>
<keyword id="KW-0597">Phosphoprotein</keyword>
<keyword id="KW-0602">Photosynthesis</keyword>
<keyword id="KW-0604">Photosystem II</keyword>
<keyword id="KW-0934">Plastid</keyword>
<keyword id="KW-0793">Thylakoid</keyword>
<keyword id="KW-0812">Transmembrane</keyword>
<keyword id="KW-1133">Transmembrane helix</keyword>
<keyword id="KW-0813">Transport</keyword>
<evidence type="ECO:0000250" key="1">
    <source>
        <dbReference type="UniProtKB" id="P56761"/>
    </source>
</evidence>
<evidence type="ECO:0000255" key="2">
    <source>
        <dbReference type="HAMAP-Rule" id="MF_01383"/>
    </source>
</evidence>